<organism>
    <name type="scientific">Phalaenopsis aphrodite subsp. formosana</name>
    <name type="common">Moth orchid</name>
    <dbReference type="NCBI Taxonomy" id="308872"/>
    <lineage>
        <taxon>Eukaryota</taxon>
        <taxon>Viridiplantae</taxon>
        <taxon>Streptophyta</taxon>
        <taxon>Embryophyta</taxon>
        <taxon>Tracheophyta</taxon>
        <taxon>Spermatophyta</taxon>
        <taxon>Magnoliopsida</taxon>
        <taxon>Liliopsida</taxon>
        <taxon>Asparagales</taxon>
        <taxon>Orchidaceae</taxon>
        <taxon>Epidendroideae</taxon>
        <taxon>Vandeae</taxon>
        <taxon>Aeridinae</taxon>
        <taxon>Phalaenopsis</taxon>
    </lineage>
</organism>
<evidence type="ECO:0000250" key="1"/>
<evidence type="ECO:0000305" key="2"/>
<name>RR3_PHAAO</name>
<accession>Q3BAJ8</accession>
<dbReference type="EMBL" id="AY916449">
    <property type="protein sequence ID" value="AAW82538.1"/>
    <property type="molecule type" value="Genomic_DNA"/>
</dbReference>
<dbReference type="RefSeq" id="YP_358620.1">
    <property type="nucleotide sequence ID" value="NC_007499.1"/>
</dbReference>
<dbReference type="SMR" id="Q3BAJ8"/>
<dbReference type="GeneID" id="3741719"/>
<dbReference type="GO" id="GO:0009507">
    <property type="term" value="C:chloroplast"/>
    <property type="evidence" value="ECO:0007669"/>
    <property type="project" value="UniProtKB-SubCell"/>
</dbReference>
<dbReference type="GO" id="GO:0022627">
    <property type="term" value="C:cytosolic small ribosomal subunit"/>
    <property type="evidence" value="ECO:0007669"/>
    <property type="project" value="TreeGrafter"/>
</dbReference>
<dbReference type="GO" id="GO:0019843">
    <property type="term" value="F:rRNA binding"/>
    <property type="evidence" value="ECO:0007669"/>
    <property type="project" value="UniProtKB-KW"/>
</dbReference>
<dbReference type="GO" id="GO:0003735">
    <property type="term" value="F:structural constituent of ribosome"/>
    <property type="evidence" value="ECO:0007669"/>
    <property type="project" value="InterPro"/>
</dbReference>
<dbReference type="GO" id="GO:0006412">
    <property type="term" value="P:translation"/>
    <property type="evidence" value="ECO:0007669"/>
    <property type="project" value="UniProtKB-UniRule"/>
</dbReference>
<dbReference type="CDD" id="cd02412">
    <property type="entry name" value="KH-II_30S_S3"/>
    <property type="match status" value="1"/>
</dbReference>
<dbReference type="FunFam" id="3.30.1140.32:FF:000003">
    <property type="entry name" value="30S ribosomal protein S3, chloroplastic"/>
    <property type="match status" value="1"/>
</dbReference>
<dbReference type="FunFam" id="3.30.300.20:FF:000008">
    <property type="entry name" value="30S ribosomal protein S3, chloroplastic"/>
    <property type="match status" value="1"/>
</dbReference>
<dbReference type="Gene3D" id="3.30.300.20">
    <property type="match status" value="1"/>
</dbReference>
<dbReference type="Gene3D" id="3.30.1140.32">
    <property type="entry name" value="Ribosomal protein S3, C-terminal domain"/>
    <property type="match status" value="1"/>
</dbReference>
<dbReference type="HAMAP" id="MF_01309_B">
    <property type="entry name" value="Ribosomal_uS3_B"/>
    <property type="match status" value="1"/>
</dbReference>
<dbReference type="InterPro" id="IPR015946">
    <property type="entry name" value="KH_dom-like_a/b"/>
</dbReference>
<dbReference type="InterPro" id="IPR009019">
    <property type="entry name" value="KH_sf_prok-type"/>
</dbReference>
<dbReference type="InterPro" id="IPR036419">
    <property type="entry name" value="Ribosomal_S3_C_sf"/>
</dbReference>
<dbReference type="InterPro" id="IPR005704">
    <property type="entry name" value="Ribosomal_uS3_bac-typ"/>
</dbReference>
<dbReference type="InterPro" id="IPR001351">
    <property type="entry name" value="Ribosomal_uS3_C"/>
</dbReference>
<dbReference type="InterPro" id="IPR018280">
    <property type="entry name" value="Ribosomal_uS3_CS"/>
</dbReference>
<dbReference type="NCBIfam" id="TIGR01009">
    <property type="entry name" value="rpsC_bact"/>
    <property type="match status" value="1"/>
</dbReference>
<dbReference type="PANTHER" id="PTHR11760">
    <property type="entry name" value="30S/40S RIBOSOMAL PROTEIN S3"/>
    <property type="match status" value="1"/>
</dbReference>
<dbReference type="PANTHER" id="PTHR11760:SF19">
    <property type="entry name" value="SMALL RIBOSOMAL SUBUNIT PROTEIN US3C"/>
    <property type="match status" value="1"/>
</dbReference>
<dbReference type="Pfam" id="PF00189">
    <property type="entry name" value="Ribosomal_S3_C"/>
    <property type="match status" value="1"/>
</dbReference>
<dbReference type="SUPFAM" id="SSF54814">
    <property type="entry name" value="Prokaryotic type KH domain (KH-domain type II)"/>
    <property type="match status" value="1"/>
</dbReference>
<dbReference type="SUPFAM" id="SSF54821">
    <property type="entry name" value="Ribosomal protein S3 C-terminal domain"/>
    <property type="match status" value="1"/>
</dbReference>
<dbReference type="PROSITE" id="PS00548">
    <property type="entry name" value="RIBOSOMAL_S3"/>
    <property type="match status" value="1"/>
</dbReference>
<reference key="1">
    <citation type="journal article" date="2006" name="Mol. Biol. Evol.">
        <title>The chloroplast genome of Phalaenopsis aphrodite (Orchidaceae): comparative analysis of evolutionary rate with that of grasses and its phylogenetic implications.</title>
        <authorList>
            <person name="Chang C.-C."/>
            <person name="Lin H.-C."/>
            <person name="Lin I.-P."/>
            <person name="Chow T.-Y."/>
            <person name="Chen H.-H."/>
            <person name="Chen W.-H."/>
            <person name="Cheng C.-H."/>
            <person name="Lin C.-Y."/>
            <person name="Liu S.-M."/>
            <person name="Chang C.-C."/>
            <person name="Chaw S.-M."/>
        </authorList>
    </citation>
    <scope>NUCLEOTIDE SEQUENCE [LARGE SCALE GENOMIC DNA]</scope>
    <source>
        <strain>cv. Taisugar TS-97</strain>
    </source>
</reference>
<protein>
    <recommendedName>
        <fullName evidence="2">Small ribosomal subunit protein uS3c</fullName>
    </recommendedName>
    <alternativeName>
        <fullName>30S ribosomal protein S3, chloroplastic</fullName>
    </alternativeName>
</protein>
<geneLocation type="chloroplast"/>
<proteinExistence type="inferred from homology"/>
<sequence length="218" mass="25175">MGQKINPLGFRLGTTQSHHSFWFAKPKNFSIGLQEDERIRNCIKDYVKKNKKISSGFEGIAYIGIQKRIDFIQVIIYIGFPNLLIEGRTRGVEELQMNVQKEFHSVNRRLNIAITRIEKPYGQPNILAEYIALQLKNRVSFRKAMKKAIELTEQTGTKGIQVQIAGRIDGKEIARVEWIREGRVPLQTIRAKIDHCSHTVRTIYGILGIKIWIFVNQE</sequence>
<feature type="chain" id="PRO_0000230756" description="Small ribosomal subunit protein uS3c">
    <location>
        <begin position="1"/>
        <end position="218"/>
    </location>
</feature>
<feature type="domain" description="KH type-2">
    <location>
        <begin position="43"/>
        <end position="118"/>
    </location>
</feature>
<comment type="subunit">
    <text evidence="1">Part of the 30S ribosomal subunit.</text>
</comment>
<comment type="subcellular location">
    <subcellularLocation>
        <location>Plastid</location>
        <location>Chloroplast</location>
    </subcellularLocation>
</comment>
<comment type="similarity">
    <text evidence="2">Belongs to the universal ribosomal protein uS3 family.</text>
</comment>
<keyword id="KW-0150">Chloroplast</keyword>
<keyword id="KW-0934">Plastid</keyword>
<keyword id="KW-0687">Ribonucleoprotein</keyword>
<keyword id="KW-0689">Ribosomal protein</keyword>
<keyword id="KW-0694">RNA-binding</keyword>
<keyword id="KW-0699">rRNA-binding</keyword>
<gene>
    <name type="primary">rps3</name>
</gene>